<gene>
    <name type="ORF">CG16868</name>
</gene>
<protein>
    <recommendedName>
        <fullName>VWFA and cache domain-containing protein CG16868</fullName>
    </recommendedName>
</protein>
<dbReference type="EMBL" id="AE013599">
    <property type="protein sequence ID" value="AAF57485.1"/>
    <property type="molecule type" value="Genomic_DNA"/>
</dbReference>
<dbReference type="EMBL" id="BT021382">
    <property type="protein sequence ID" value="AAX33530.1"/>
    <property type="molecule type" value="mRNA"/>
</dbReference>
<dbReference type="RefSeq" id="NP_611469.1">
    <property type="nucleotide sequence ID" value="NM_137625.2"/>
</dbReference>
<dbReference type="SMR" id="Q5BI42"/>
<dbReference type="FunCoup" id="Q5BI42">
    <property type="interactions" value="215"/>
</dbReference>
<dbReference type="IntAct" id="Q5BI42">
    <property type="interactions" value="1"/>
</dbReference>
<dbReference type="STRING" id="7227.FBpp0085614"/>
<dbReference type="GlyGen" id="Q5BI42">
    <property type="glycosylation" value="14 sites"/>
</dbReference>
<dbReference type="PaxDb" id="7227-FBpp0085614"/>
<dbReference type="DNASU" id="37298"/>
<dbReference type="EnsemblMetazoa" id="FBtr0086302">
    <property type="protein sequence ID" value="FBpp0085614"/>
    <property type="gene ID" value="FBgn0034498"/>
</dbReference>
<dbReference type="GeneID" id="37298"/>
<dbReference type="KEGG" id="dme:Dmel_CG16868"/>
<dbReference type="UCSC" id="CG16868-RA">
    <property type="organism name" value="d. melanogaster"/>
</dbReference>
<dbReference type="AGR" id="FB:FBgn0034498"/>
<dbReference type="FlyBase" id="FBgn0034498">
    <property type="gene designation" value="CG16868"/>
</dbReference>
<dbReference type="VEuPathDB" id="VectorBase:FBgn0034498"/>
<dbReference type="eggNOG" id="KOG2353">
    <property type="taxonomic scope" value="Eukaryota"/>
</dbReference>
<dbReference type="GeneTree" id="ENSGT00940000157568"/>
<dbReference type="HOGENOM" id="CLU_004521_0_0_1"/>
<dbReference type="InParanoid" id="Q5BI42"/>
<dbReference type="OMA" id="NTHPYLS"/>
<dbReference type="OrthoDB" id="2150145at2759"/>
<dbReference type="PhylomeDB" id="Q5BI42"/>
<dbReference type="BioGRID-ORCS" id="37298">
    <property type="hits" value="0 hits in 1 CRISPR screen"/>
</dbReference>
<dbReference type="GenomeRNAi" id="37298"/>
<dbReference type="PRO" id="PR:Q5BI42"/>
<dbReference type="Proteomes" id="UP000000803">
    <property type="component" value="Chromosome 2R"/>
</dbReference>
<dbReference type="Bgee" id="FBgn0034498">
    <property type="expression patterns" value="Expressed in cleaving embryo and 48 other cell types or tissues"/>
</dbReference>
<dbReference type="GO" id="GO:0005891">
    <property type="term" value="C:voltage-gated calcium channel complex"/>
    <property type="evidence" value="ECO:0000318"/>
    <property type="project" value="GO_Central"/>
</dbReference>
<dbReference type="GO" id="GO:0005245">
    <property type="term" value="F:voltage-gated calcium channel activity"/>
    <property type="evidence" value="ECO:0000318"/>
    <property type="project" value="GO_Central"/>
</dbReference>
<dbReference type="FunFam" id="3.30.450.20:FF:000138">
    <property type="entry name" value="VWFA and cache domain-containing protein CG16868"/>
    <property type="match status" value="1"/>
</dbReference>
<dbReference type="Gene3D" id="3.30.450.20">
    <property type="entry name" value="PAS domain"/>
    <property type="match status" value="1"/>
</dbReference>
<dbReference type="Gene3D" id="3.40.50.410">
    <property type="entry name" value="von Willebrand factor, type A domain"/>
    <property type="match status" value="1"/>
</dbReference>
<dbReference type="InterPro" id="IPR051173">
    <property type="entry name" value="Ca_channel_alpha-2/delta"/>
</dbReference>
<dbReference type="InterPro" id="IPR029151">
    <property type="entry name" value="Sensor-like_sf"/>
</dbReference>
<dbReference type="InterPro" id="IPR002035">
    <property type="entry name" value="VWF_A"/>
</dbReference>
<dbReference type="InterPro" id="IPR036465">
    <property type="entry name" value="vWFA_dom_sf"/>
</dbReference>
<dbReference type="PANTHER" id="PTHR10166">
    <property type="entry name" value="VOLTAGE-DEPENDENT CALCIUM CHANNEL SUBUNIT ALPHA-2/DELTA-RELATED"/>
    <property type="match status" value="1"/>
</dbReference>
<dbReference type="PANTHER" id="PTHR10166:SF66">
    <property type="entry name" value="VWFA AND CACHE DOMAIN-CONTAINING PROTEIN CG16868"/>
    <property type="match status" value="1"/>
</dbReference>
<dbReference type="SUPFAM" id="SSF103190">
    <property type="entry name" value="Sensory domain-like"/>
    <property type="match status" value="1"/>
</dbReference>
<dbReference type="SUPFAM" id="SSF53300">
    <property type="entry name" value="vWA-like"/>
    <property type="match status" value="1"/>
</dbReference>
<dbReference type="PROSITE" id="PS50234">
    <property type="entry name" value="VWFA"/>
    <property type="match status" value="1"/>
</dbReference>
<organism>
    <name type="scientific">Drosophila melanogaster</name>
    <name type="common">Fruit fly</name>
    <dbReference type="NCBI Taxonomy" id="7227"/>
    <lineage>
        <taxon>Eukaryota</taxon>
        <taxon>Metazoa</taxon>
        <taxon>Ecdysozoa</taxon>
        <taxon>Arthropoda</taxon>
        <taxon>Hexapoda</taxon>
        <taxon>Insecta</taxon>
        <taxon>Pterygota</taxon>
        <taxon>Neoptera</taxon>
        <taxon>Endopterygota</taxon>
        <taxon>Diptera</taxon>
        <taxon>Brachycera</taxon>
        <taxon>Muscomorpha</taxon>
        <taxon>Ephydroidea</taxon>
        <taxon>Drosophilidae</taxon>
        <taxon>Drosophila</taxon>
        <taxon>Sophophora</taxon>
    </lineage>
</organism>
<accession>Q5BI42</accession>
<evidence type="ECO:0000255" key="1"/>
<evidence type="ECO:0000255" key="2">
    <source>
        <dbReference type="PROSITE-ProRule" id="PRU00219"/>
    </source>
</evidence>
<evidence type="ECO:0000256" key="3">
    <source>
        <dbReference type="SAM" id="MobiDB-lite"/>
    </source>
</evidence>
<evidence type="ECO:0000305" key="4"/>
<keyword id="KW-0106">Calcium</keyword>
<keyword id="KW-0109">Calcium transport</keyword>
<keyword id="KW-0325">Glycoprotein</keyword>
<keyword id="KW-0406">Ion transport</keyword>
<keyword id="KW-0472">Membrane</keyword>
<keyword id="KW-1185">Reference proteome</keyword>
<keyword id="KW-0677">Repeat</keyword>
<keyword id="KW-0732">Signal</keyword>
<keyword id="KW-0812">Transmembrane</keyword>
<keyword id="KW-1133">Transmembrane helix</keyword>
<keyword id="KW-0813">Transport</keyword>
<name>CAHD1_DROME</name>
<reference key="1">
    <citation type="journal article" date="2000" name="Science">
        <title>The genome sequence of Drosophila melanogaster.</title>
        <authorList>
            <person name="Adams M.D."/>
            <person name="Celniker S.E."/>
            <person name="Holt R.A."/>
            <person name="Evans C.A."/>
            <person name="Gocayne J.D."/>
            <person name="Amanatides P.G."/>
            <person name="Scherer S.E."/>
            <person name="Li P.W."/>
            <person name="Hoskins R.A."/>
            <person name="Galle R.F."/>
            <person name="George R.A."/>
            <person name="Lewis S.E."/>
            <person name="Richards S."/>
            <person name="Ashburner M."/>
            <person name="Henderson S.N."/>
            <person name="Sutton G.G."/>
            <person name="Wortman J.R."/>
            <person name="Yandell M.D."/>
            <person name="Zhang Q."/>
            <person name="Chen L.X."/>
            <person name="Brandon R.C."/>
            <person name="Rogers Y.-H.C."/>
            <person name="Blazej R.G."/>
            <person name="Champe M."/>
            <person name="Pfeiffer B.D."/>
            <person name="Wan K.H."/>
            <person name="Doyle C."/>
            <person name="Baxter E.G."/>
            <person name="Helt G."/>
            <person name="Nelson C.R."/>
            <person name="Miklos G.L.G."/>
            <person name="Abril J.F."/>
            <person name="Agbayani A."/>
            <person name="An H.-J."/>
            <person name="Andrews-Pfannkoch C."/>
            <person name="Baldwin D."/>
            <person name="Ballew R.M."/>
            <person name="Basu A."/>
            <person name="Baxendale J."/>
            <person name="Bayraktaroglu L."/>
            <person name="Beasley E.M."/>
            <person name="Beeson K.Y."/>
            <person name="Benos P.V."/>
            <person name="Berman B.P."/>
            <person name="Bhandari D."/>
            <person name="Bolshakov S."/>
            <person name="Borkova D."/>
            <person name="Botchan M.R."/>
            <person name="Bouck J."/>
            <person name="Brokstein P."/>
            <person name="Brottier P."/>
            <person name="Burtis K.C."/>
            <person name="Busam D.A."/>
            <person name="Butler H."/>
            <person name="Cadieu E."/>
            <person name="Center A."/>
            <person name="Chandra I."/>
            <person name="Cherry J.M."/>
            <person name="Cawley S."/>
            <person name="Dahlke C."/>
            <person name="Davenport L.B."/>
            <person name="Davies P."/>
            <person name="de Pablos B."/>
            <person name="Delcher A."/>
            <person name="Deng Z."/>
            <person name="Mays A.D."/>
            <person name="Dew I."/>
            <person name="Dietz S.M."/>
            <person name="Dodson K."/>
            <person name="Doup L.E."/>
            <person name="Downes M."/>
            <person name="Dugan-Rocha S."/>
            <person name="Dunkov B.C."/>
            <person name="Dunn P."/>
            <person name="Durbin K.J."/>
            <person name="Evangelista C.C."/>
            <person name="Ferraz C."/>
            <person name="Ferriera S."/>
            <person name="Fleischmann W."/>
            <person name="Fosler C."/>
            <person name="Gabrielian A.E."/>
            <person name="Garg N.S."/>
            <person name="Gelbart W.M."/>
            <person name="Glasser K."/>
            <person name="Glodek A."/>
            <person name="Gong F."/>
            <person name="Gorrell J.H."/>
            <person name="Gu Z."/>
            <person name="Guan P."/>
            <person name="Harris M."/>
            <person name="Harris N.L."/>
            <person name="Harvey D.A."/>
            <person name="Heiman T.J."/>
            <person name="Hernandez J.R."/>
            <person name="Houck J."/>
            <person name="Hostin D."/>
            <person name="Houston K.A."/>
            <person name="Howland T.J."/>
            <person name="Wei M.-H."/>
            <person name="Ibegwam C."/>
            <person name="Jalali M."/>
            <person name="Kalush F."/>
            <person name="Karpen G.H."/>
            <person name="Ke Z."/>
            <person name="Kennison J.A."/>
            <person name="Ketchum K.A."/>
            <person name="Kimmel B.E."/>
            <person name="Kodira C.D."/>
            <person name="Kraft C.L."/>
            <person name="Kravitz S."/>
            <person name="Kulp D."/>
            <person name="Lai Z."/>
            <person name="Lasko P."/>
            <person name="Lei Y."/>
            <person name="Levitsky A.A."/>
            <person name="Li J.H."/>
            <person name="Li Z."/>
            <person name="Liang Y."/>
            <person name="Lin X."/>
            <person name="Liu X."/>
            <person name="Mattei B."/>
            <person name="McIntosh T.C."/>
            <person name="McLeod M.P."/>
            <person name="McPherson D."/>
            <person name="Merkulov G."/>
            <person name="Milshina N.V."/>
            <person name="Mobarry C."/>
            <person name="Morris J."/>
            <person name="Moshrefi A."/>
            <person name="Mount S.M."/>
            <person name="Moy M."/>
            <person name="Murphy B."/>
            <person name="Murphy L."/>
            <person name="Muzny D.M."/>
            <person name="Nelson D.L."/>
            <person name="Nelson D.R."/>
            <person name="Nelson K.A."/>
            <person name="Nixon K."/>
            <person name="Nusskern D.R."/>
            <person name="Pacleb J.M."/>
            <person name="Palazzolo M."/>
            <person name="Pittman G.S."/>
            <person name="Pan S."/>
            <person name="Pollard J."/>
            <person name="Puri V."/>
            <person name="Reese M.G."/>
            <person name="Reinert K."/>
            <person name="Remington K."/>
            <person name="Saunders R.D.C."/>
            <person name="Scheeler F."/>
            <person name="Shen H."/>
            <person name="Shue B.C."/>
            <person name="Siden-Kiamos I."/>
            <person name="Simpson M."/>
            <person name="Skupski M.P."/>
            <person name="Smith T.J."/>
            <person name="Spier E."/>
            <person name="Spradling A.C."/>
            <person name="Stapleton M."/>
            <person name="Strong R."/>
            <person name="Sun E."/>
            <person name="Svirskas R."/>
            <person name="Tector C."/>
            <person name="Turner R."/>
            <person name="Venter E."/>
            <person name="Wang A.H."/>
            <person name="Wang X."/>
            <person name="Wang Z.-Y."/>
            <person name="Wassarman D.A."/>
            <person name="Weinstock G.M."/>
            <person name="Weissenbach J."/>
            <person name="Williams S.M."/>
            <person name="Woodage T."/>
            <person name="Worley K.C."/>
            <person name="Wu D."/>
            <person name="Yang S."/>
            <person name="Yao Q.A."/>
            <person name="Ye J."/>
            <person name="Yeh R.-F."/>
            <person name="Zaveri J.S."/>
            <person name="Zhan M."/>
            <person name="Zhang G."/>
            <person name="Zhao Q."/>
            <person name="Zheng L."/>
            <person name="Zheng X.H."/>
            <person name="Zhong F.N."/>
            <person name="Zhong W."/>
            <person name="Zhou X."/>
            <person name="Zhu S.C."/>
            <person name="Zhu X."/>
            <person name="Smith H.O."/>
            <person name="Gibbs R.A."/>
            <person name="Myers E.W."/>
            <person name="Rubin G.M."/>
            <person name="Venter J.C."/>
        </authorList>
    </citation>
    <scope>NUCLEOTIDE SEQUENCE [LARGE SCALE GENOMIC DNA]</scope>
    <source>
        <strain>Berkeley</strain>
    </source>
</reference>
<reference key="2">
    <citation type="journal article" date="2002" name="Genome Biol.">
        <title>Annotation of the Drosophila melanogaster euchromatic genome: a systematic review.</title>
        <authorList>
            <person name="Misra S."/>
            <person name="Crosby M.A."/>
            <person name="Mungall C.J."/>
            <person name="Matthews B.B."/>
            <person name="Campbell K.S."/>
            <person name="Hradecky P."/>
            <person name="Huang Y."/>
            <person name="Kaminker J.S."/>
            <person name="Millburn G.H."/>
            <person name="Prochnik S.E."/>
            <person name="Smith C.D."/>
            <person name="Tupy J.L."/>
            <person name="Whitfield E.J."/>
            <person name="Bayraktaroglu L."/>
            <person name="Berman B.P."/>
            <person name="Bettencourt B.R."/>
            <person name="Celniker S.E."/>
            <person name="de Grey A.D.N.J."/>
            <person name="Drysdale R.A."/>
            <person name="Harris N.L."/>
            <person name="Richter J."/>
            <person name="Russo S."/>
            <person name="Schroeder A.J."/>
            <person name="Shu S.Q."/>
            <person name="Stapleton M."/>
            <person name="Yamada C."/>
            <person name="Ashburner M."/>
            <person name="Gelbart W.M."/>
            <person name="Rubin G.M."/>
            <person name="Lewis S.E."/>
        </authorList>
    </citation>
    <scope>GENOME REANNOTATION</scope>
    <source>
        <strain>Berkeley</strain>
    </source>
</reference>
<reference key="3">
    <citation type="submission" date="2006-11" db="EMBL/GenBank/DDBJ databases">
        <authorList>
            <person name="Stapleton M."/>
            <person name="Carlson J.W."/>
            <person name="Frise E."/>
            <person name="Kapadia B."/>
            <person name="Park S."/>
            <person name="Wan K.H."/>
            <person name="Yu C."/>
            <person name="Celniker S.E."/>
        </authorList>
    </citation>
    <scope>NUCLEOTIDE SEQUENCE [LARGE SCALE MRNA]</scope>
    <source>
        <strain>Berkeley</strain>
        <tissue>Embryo</tissue>
    </source>
</reference>
<proteinExistence type="evidence at transcript level"/>
<feature type="signal peptide" evidence="1">
    <location>
        <begin position="1"/>
        <end position="23"/>
    </location>
</feature>
<feature type="chain" id="PRO_0000304663" description="VWFA and cache domain-containing protein CG16868">
    <location>
        <begin position="24"/>
        <end position="1449"/>
    </location>
</feature>
<feature type="topological domain" description="Extracellular" evidence="1">
    <location>
        <begin position="24"/>
        <end position="1220"/>
    </location>
</feature>
<feature type="transmembrane region" description="Helical" evidence="1">
    <location>
        <begin position="1221"/>
        <end position="1241"/>
    </location>
</feature>
<feature type="topological domain" description="Cytoplasmic" evidence="1">
    <location>
        <begin position="1242"/>
        <end position="1449"/>
    </location>
</feature>
<feature type="domain" description="VWFA" evidence="2">
    <location>
        <begin position="320"/>
        <end position="541"/>
    </location>
</feature>
<feature type="domain" description="Cache 1">
    <location>
        <begin position="557"/>
        <end position="639"/>
    </location>
</feature>
<feature type="domain" description="Cache 2">
    <location>
        <begin position="889"/>
        <end position="934"/>
    </location>
</feature>
<feature type="region of interest" description="Disordered" evidence="3">
    <location>
        <begin position="1307"/>
        <end position="1339"/>
    </location>
</feature>
<feature type="region of interest" description="Disordered" evidence="3">
    <location>
        <begin position="1352"/>
        <end position="1416"/>
    </location>
</feature>
<feature type="compositionally biased region" description="Low complexity" evidence="3">
    <location>
        <begin position="1359"/>
        <end position="1369"/>
    </location>
</feature>
<feature type="compositionally biased region" description="Polar residues" evidence="3">
    <location>
        <begin position="1370"/>
        <end position="1392"/>
    </location>
</feature>
<feature type="glycosylation site" description="N-linked (GlcNAc...) asparagine" evidence="1">
    <location>
        <position position="32"/>
    </location>
</feature>
<feature type="glycosylation site" description="N-linked (GlcNAc...) asparagine" evidence="1">
    <location>
        <position position="112"/>
    </location>
</feature>
<feature type="glycosylation site" description="N-linked (GlcNAc...) asparagine" evidence="1">
    <location>
        <position position="153"/>
    </location>
</feature>
<feature type="glycosylation site" description="N-linked (GlcNAc...) asparagine" evidence="1">
    <location>
        <position position="407"/>
    </location>
</feature>
<feature type="glycosylation site" description="N-linked (GlcNAc...) asparagine" evidence="1">
    <location>
        <position position="447"/>
    </location>
</feature>
<feature type="glycosylation site" description="N-linked (GlcNAc...) asparagine" evidence="1">
    <location>
        <position position="497"/>
    </location>
</feature>
<feature type="glycosylation site" description="N-linked (GlcNAc...) asparagine" evidence="1">
    <location>
        <position position="649"/>
    </location>
</feature>
<feature type="glycosylation site" description="N-linked (GlcNAc...) asparagine" evidence="1">
    <location>
        <position position="668"/>
    </location>
</feature>
<feature type="glycosylation site" description="N-linked (GlcNAc...) asparagine" evidence="1">
    <location>
        <position position="707"/>
    </location>
</feature>
<feature type="glycosylation site" description="N-linked (GlcNAc...) asparagine" evidence="1">
    <location>
        <position position="1015"/>
    </location>
</feature>
<feature type="glycosylation site" description="N-linked (GlcNAc...) asparagine" evidence="1">
    <location>
        <position position="1025"/>
    </location>
</feature>
<feature type="glycosylation site" description="N-linked (GlcNAc...) asparagine" evidence="1">
    <location>
        <position position="1059"/>
    </location>
</feature>
<feature type="glycosylation site" description="N-linked (GlcNAc...) asparagine" evidence="1">
    <location>
        <position position="1111"/>
    </location>
</feature>
<sequence length="1449" mass="162091">MWPNSNLNAVLLILAVLACPTSSQHVPLAMANSTSNQVPTDPGFMPLQQSPGSVFFVHHNQQNAMQLRHSMEGKLRNIRNTELRVAKIQEIFDSMHFSSAKGASNTRQASSNDSNVVNPQLQRDLQLFSERLSKKIQKATYVVLELRELLRYNLTKVWQYSYDDEDDESESEMDLEMELEDLHARNTASPTDEHVQLYLNTQIESCQPDYETDLEYGSSSTQSIHYNRQQIQILNYLKSDDARATFLNENNARSLAVNGYISNQLVLLKRRLSRSDAENSNSKPISGNHFKHIYFLSNSDGASASLHFRQLYVSAIKQKFVLFLIDVGSALSAELFDLSKSFVHEMLQLLEDTDKVSLVTVASEANFMSLEAFPAEAGHGIYSATRAHKEEIISFINSLSRAQAFTNHSLGFEYSFELLHRLQQSGMINTAEQPVEFVYITRGLLTNLSDAMAVLRVVADGQRRLRAPVIINTCAVVLDEKRIMYEKQFLNDVASQNYTKYEIDVASWWPSGQEASELVGRFYVLSKMHAETSLPQTSSRIFGPLFQERYLSDTLEVHPPVVDADSGDVLVSITHAVPPYGVVGVNLYLSDLLEDLLNYPSTTSSAKQGLGYAFLLDRSTGNTLAHPAFPRPLIQRETSYPVNIAYLENATDFSSHIRDRLLREESGNVTTDVYVGRQRLQRTYYWQSVLGFYVLCLVSSGGDTLRNVSSTQRYNLKDTVSNYEPGYYGESMDLLYHRLDLNQGGSAPPKTCRYFRQVATMDAPTLFLSAAAFESPFGFLHNNRPRTQLRHVESIMAYLRDSSGLLANMGLRPSIRHEVGVLYQAMQQLRRRHQDARGSLRSHVIRRYIASVSGVLQLYPGCLLSSSYDPTRRPWFRQAIAQPGKIVSTAPYLDAGGAGYIITIAHTIFEGKAHALHSAQQDRPVAVVALDVPYAFYYRLILEGTPICQLPHIKCLLFEHEGYLLAHPSMLQPATLTKNQRRPHEHLTHKESYLANDMLNHGQLVRKLGCASYQNRTLQRYYAFNTSLSSILGNVVHGERTKYAIALIRGSNLFAAVLNSSCDGGAFCPCSTIDRECLNCKRMDQTDCECPCECPMVGDSSSPSSLMYFANYTRQFPYCPPPSEHFIALPPTTQLLSTLPNCPGSAGICETYSTQRECLGVMGCEWCQLDVDGNSFSTSFCSSQASCFNGVLASLTPYGELDEMELLAAHNPQREQHAYSAFGPLGGAIVVLVMVIGFAIYCYRHNLDAQTQEHFYVDSVQEENYGLPLSRFNFDDCKAHDEPPLGGGYDHASAQRQLMHAADISPYHVSSGSSYRRPPNGESDHGYSTMTPHEDSSDQQCFTLAEPLLLHDKRHSKSDTMSISTSISSPTNRQQSSSQPNTHPYLSNQPTSKTERYKQVQATPSPCRGTPAGGSVYGQTTLPLEGDKTRPHYILAPVTVHRHMETAES</sequence>
<comment type="subcellular location">
    <subcellularLocation>
        <location evidence="4">Membrane</location>
        <topology evidence="4">Single-pass type I membrane protein</topology>
    </subcellularLocation>
</comment>
<comment type="similarity">
    <text evidence="4">Belongs to the calcium channel subunit alpha-2/delta family.</text>
</comment>